<proteinExistence type="inferred from homology"/>
<reference key="1">
    <citation type="journal article" date="2011" name="J. Bacteriol.">
        <title>Comparative genomics of 28 Salmonella enterica isolates: evidence for CRISPR-mediated adaptive sublineage evolution.</title>
        <authorList>
            <person name="Fricke W.F."/>
            <person name="Mammel M.K."/>
            <person name="McDermott P.F."/>
            <person name="Tartera C."/>
            <person name="White D.G."/>
            <person name="Leclerc J.E."/>
            <person name="Ravel J."/>
            <person name="Cebula T.A."/>
        </authorList>
    </citation>
    <scope>NUCLEOTIDE SEQUENCE [LARGE SCALE GENOMIC DNA]</scope>
    <source>
        <strain>SL476</strain>
    </source>
</reference>
<sequence length="239" mass="25978">MATPHINAEMGDFADVVLMPGDPLRAKHIAETFLENVREVNNVRGMLGFTGTYKGRKISVMGHGMGIPSCSIYTKELITDFGVKKIIRVGSCGAVRMDVKLRDVVIGMGACTDSKVNRIRFKDHDFAAIADFDMVRNAVDAAKALGVDARVGNLFSADLFYSPDGEMFDVMEKYGVLGVEMEAAGIYGVAAEFGAKALTICTVSDHIRTHEQTTAAERQTTFNDMIKIALESVLLGDKE</sequence>
<accession>B4TH02</accession>
<protein>
    <recommendedName>
        <fullName evidence="2">Purine nucleoside phosphorylase DeoD-type</fullName>
        <shortName evidence="2">PNP</shortName>
        <ecNumber evidence="2">2.4.2.1</ecNumber>
    </recommendedName>
</protein>
<comment type="function">
    <text evidence="2">Catalyzes the reversible phosphorolytic breakdown of the N-glycosidic bond in the beta-(deoxy)ribonucleoside molecules, with the formation of the corresponding free purine bases and pentose-1-phosphate.</text>
</comment>
<comment type="catalytic activity">
    <reaction evidence="2">
        <text>a purine D-ribonucleoside + phosphate = a purine nucleobase + alpha-D-ribose 1-phosphate</text>
        <dbReference type="Rhea" id="RHEA:19805"/>
        <dbReference type="ChEBI" id="CHEBI:26386"/>
        <dbReference type="ChEBI" id="CHEBI:43474"/>
        <dbReference type="ChEBI" id="CHEBI:57720"/>
        <dbReference type="ChEBI" id="CHEBI:142355"/>
        <dbReference type="EC" id="2.4.2.1"/>
    </reaction>
</comment>
<comment type="catalytic activity">
    <reaction evidence="2">
        <text>a purine 2'-deoxy-D-ribonucleoside + phosphate = a purine nucleobase + 2-deoxy-alpha-D-ribose 1-phosphate</text>
        <dbReference type="Rhea" id="RHEA:36431"/>
        <dbReference type="ChEBI" id="CHEBI:26386"/>
        <dbReference type="ChEBI" id="CHEBI:43474"/>
        <dbReference type="ChEBI" id="CHEBI:57259"/>
        <dbReference type="ChEBI" id="CHEBI:142361"/>
        <dbReference type="EC" id="2.4.2.1"/>
    </reaction>
</comment>
<comment type="subunit">
    <text evidence="2">Homohexamer; trimer of homodimers.</text>
</comment>
<comment type="similarity">
    <text evidence="2">Belongs to the PNP/UDP phosphorylase family.</text>
</comment>
<keyword id="KW-0328">Glycosyltransferase</keyword>
<keyword id="KW-0808">Transferase</keyword>
<dbReference type="EC" id="2.4.2.1" evidence="2"/>
<dbReference type="EMBL" id="CP001120">
    <property type="protein sequence ID" value="ACF70391.1"/>
    <property type="molecule type" value="Genomic_DNA"/>
</dbReference>
<dbReference type="RefSeq" id="WP_000224870.1">
    <property type="nucleotide sequence ID" value="NC_011083.1"/>
</dbReference>
<dbReference type="SMR" id="B4TH02"/>
<dbReference type="KEGG" id="seh:SeHA_C4978"/>
<dbReference type="HOGENOM" id="CLU_068457_2_0_6"/>
<dbReference type="Proteomes" id="UP000001866">
    <property type="component" value="Chromosome"/>
</dbReference>
<dbReference type="GO" id="GO:0005829">
    <property type="term" value="C:cytosol"/>
    <property type="evidence" value="ECO:0007669"/>
    <property type="project" value="TreeGrafter"/>
</dbReference>
<dbReference type="GO" id="GO:0004731">
    <property type="term" value="F:purine-nucleoside phosphorylase activity"/>
    <property type="evidence" value="ECO:0007669"/>
    <property type="project" value="UniProtKB-UniRule"/>
</dbReference>
<dbReference type="GO" id="GO:0006152">
    <property type="term" value="P:purine nucleoside catabolic process"/>
    <property type="evidence" value="ECO:0007669"/>
    <property type="project" value="TreeGrafter"/>
</dbReference>
<dbReference type="CDD" id="cd09006">
    <property type="entry name" value="PNP_EcPNPI-like"/>
    <property type="match status" value="1"/>
</dbReference>
<dbReference type="FunFam" id="3.40.50.1580:FF:000002">
    <property type="entry name" value="Purine nucleoside phosphorylase DeoD-type"/>
    <property type="match status" value="1"/>
</dbReference>
<dbReference type="Gene3D" id="3.40.50.1580">
    <property type="entry name" value="Nucleoside phosphorylase domain"/>
    <property type="match status" value="1"/>
</dbReference>
<dbReference type="HAMAP" id="MF_01627">
    <property type="entry name" value="Pur_nucleosid_phosp"/>
    <property type="match status" value="1"/>
</dbReference>
<dbReference type="InterPro" id="IPR004402">
    <property type="entry name" value="DeoD-type"/>
</dbReference>
<dbReference type="InterPro" id="IPR018016">
    <property type="entry name" value="Nucleoside_phosphorylase_CS"/>
</dbReference>
<dbReference type="InterPro" id="IPR000845">
    <property type="entry name" value="Nucleoside_phosphorylase_d"/>
</dbReference>
<dbReference type="InterPro" id="IPR035994">
    <property type="entry name" value="Nucleoside_phosphorylase_sf"/>
</dbReference>
<dbReference type="NCBIfam" id="TIGR00107">
    <property type="entry name" value="deoD"/>
    <property type="match status" value="1"/>
</dbReference>
<dbReference type="NCBIfam" id="NF004489">
    <property type="entry name" value="PRK05819.1"/>
    <property type="match status" value="1"/>
</dbReference>
<dbReference type="NCBIfam" id="NF009914">
    <property type="entry name" value="PRK13374.1"/>
    <property type="match status" value="1"/>
</dbReference>
<dbReference type="PANTHER" id="PTHR43691:SF2">
    <property type="entry name" value="PURINE NUCLEOSIDE PHOSPHORYLASE DEOD-TYPE"/>
    <property type="match status" value="1"/>
</dbReference>
<dbReference type="PANTHER" id="PTHR43691">
    <property type="entry name" value="URIDINE PHOSPHORYLASE"/>
    <property type="match status" value="1"/>
</dbReference>
<dbReference type="Pfam" id="PF01048">
    <property type="entry name" value="PNP_UDP_1"/>
    <property type="match status" value="1"/>
</dbReference>
<dbReference type="SUPFAM" id="SSF53167">
    <property type="entry name" value="Purine and uridine phosphorylases"/>
    <property type="match status" value="1"/>
</dbReference>
<dbReference type="PROSITE" id="PS01232">
    <property type="entry name" value="PNP_UDP_1"/>
    <property type="match status" value="1"/>
</dbReference>
<feature type="chain" id="PRO_1000186218" description="Purine nucleoside phosphorylase DeoD-type">
    <location>
        <begin position="1"/>
        <end position="239"/>
    </location>
</feature>
<feature type="active site" description="Proton donor" evidence="2">
    <location>
        <position position="205"/>
    </location>
</feature>
<feature type="binding site" evidence="1">
    <location>
        <position position="5"/>
    </location>
    <ligand>
        <name>a purine D-ribonucleoside</name>
        <dbReference type="ChEBI" id="CHEBI:142355"/>
        <note>ligand shared between dimeric partners</note>
    </ligand>
</feature>
<feature type="binding site" description="in other chain" evidence="1">
    <location>
        <position position="21"/>
    </location>
    <ligand>
        <name>phosphate</name>
        <dbReference type="ChEBI" id="CHEBI:43474"/>
        <note>ligand shared between dimeric partners</note>
    </ligand>
</feature>
<feature type="binding site" description="in other chain" evidence="1">
    <location>
        <position position="25"/>
    </location>
    <ligand>
        <name>phosphate</name>
        <dbReference type="ChEBI" id="CHEBI:43474"/>
        <note>ligand shared between dimeric partners</note>
    </ligand>
</feature>
<feature type="binding site" evidence="1">
    <location>
        <position position="44"/>
    </location>
    <ligand>
        <name>phosphate</name>
        <dbReference type="ChEBI" id="CHEBI:43474"/>
        <note>ligand shared between dimeric partners</note>
    </ligand>
</feature>
<feature type="binding site" description="in other chain" evidence="1">
    <location>
        <begin position="88"/>
        <end position="91"/>
    </location>
    <ligand>
        <name>phosphate</name>
        <dbReference type="ChEBI" id="CHEBI:43474"/>
        <note>ligand shared between dimeric partners</note>
    </ligand>
</feature>
<feature type="binding site" description="in other chain" evidence="1">
    <location>
        <begin position="180"/>
        <end position="182"/>
    </location>
    <ligand>
        <name>a purine D-ribonucleoside</name>
        <dbReference type="ChEBI" id="CHEBI:142355"/>
        <note>ligand shared between dimeric partners</note>
    </ligand>
</feature>
<feature type="binding site" description="in other chain" evidence="1">
    <location>
        <begin position="204"/>
        <end position="205"/>
    </location>
    <ligand>
        <name>a purine D-ribonucleoside</name>
        <dbReference type="ChEBI" id="CHEBI:142355"/>
        <note>ligand shared between dimeric partners</note>
    </ligand>
</feature>
<feature type="site" description="Important for catalytic activity" evidence="2">
    <location>
        <position position="218"/>
    </location>
</feature>
<name>DEOD_SALHS</name>
<organism>
    <name type="scientific">Salmonella heidelberg (strain SL476)</name>
    <dbReference type="NCBI Taxonomy" id="454169"/>
    <lineage>
        <taxon>Bacteria</taxon>
        <taxon>Pseudomonadati</taxon>
        <taxon>Pseudomonadota</taxon>
        <taxon>Gammaproteobacteria</taxon>
        <taxon>Enterobacterales</taxon>
        <taxon>Enterobacteriaceae</taxon>
        <taxon>Salmonella</taxon>
    </lineage>
</organism>
<evidence type="ECO:0000250" key="1">
    <source>
        <dbReference type="UniProtKB" id="P50389"/>
    </source>
</evidence>
<evidence type="ECO:0000255" key="2">
    <source>
        <dbReference type="HAMAP-Rule" id="MF_01627"/>
    </source>
</evidence>
<gene>
    <name evidence="2" type="primary">deoD</name>
    <name type="ordered locus">SeHA_C4978</name>
</gene>